<proteinExistence type="inferred from homology"/>
<feature type="chain" id="PRO_1000023978" description="Uroporphyrinogen decarboxylase">
    <location>
        <begin position="1"/>
        <end position="354"/>
    </location>
</feature>
<feature type="binding site" evidence="1">
    <location>
        <begin position="27"/>
        <end position="31"/>
    </location>
    <ligand>
        <name>substrate</name>
    </ligand>
</feature>
<feature type="binding site" evidence="1">
    <location>
        <position position="77"/>
    </location>
    <ligand>
        <name>substrate</name>
    </ligand>
</feature>
<feature type="binding site" evidence="1">
    <location>
        <position position="154"/>
    </location>
    <ligand>
        <name>substrate</name>
    </ligand>
</feature>
<feature type="binding site" evidence="1">
    <location>
        <position position="209"/>
    </location>
    <ligand>
        <name>substrate</name>
    </ligand>
</feature>
<feature type="binding site" evidence="1">
    <location>
        <position position="327"/>
    </location>
    <ligand>
        <name>substrate</name>
    </ligand>
</feature>
<feature type="site" description="Transition state stabilizer" evidence="1">
    <location>
        <position position="77"/>
    </location>
</feature>
<organism>
    <name type="scientific">Shigella dysenteriae serotype 1 (strain Sd197)</name>
    <dbReference type="NCBI Taxonomy" id="300267"/>
    <lineage>
        <taxon>Bacteria</taxon>
        <taxon>Pseudomonadati</taxon>
        <taxon>Pseudomonadota</taxon>
        <taxon>Gammaproteobacteria</taxon>
        <taxon>Enterobacterales</taxon>
        <taxon>Enterobacteriaceae</taxon>
        <taxon>Shigella</taxon>
    </lineage>
</organism>
<protein>
    <recommendedName>
        <fullName evidence="1">Uroporphyrinogen decarboxylase</fullName>
        <shortName evidence="1">UPD</shortName>
        <shortName evidence="1">URO-D</shortName>
        <ecNumber evidence="1">4.1.1.37</ecNumber>
    </recommendedName>
</protein>
<evidence type="ECO:0000255" key="1">
    <source>
        <dbReference type="HAMAP-Rule" id="MF_00218"/>
    </source>
</evidence>
<dbReference type="EC" id="4.1.1.37" evidence="1"/>
<dbReference type="EMBL" id="CP000034">
    <property type="protein sequence ID" value="ABB63685.1"/>
    <property type="molecule type" value="Genomic_DNA"/>
</dbReference>
<dbReference type="RefSeq" id="WP_000137655.1">
    <property type="nucleotide sequence ID" value="NC_007606.1"/>
</dbReference>
<dbReference type="RefSeq" id="YP_405176.1">
    <property type="nucleotide sequence ID" value="NC_007606.1"/>
</dbReference>
<dbReference type="SMR" id="Q32AH0"/>
<dbReference type="STRING" id="300267.SDY_3729"/>
<dbReference type="EnsemblBacteria" id="ABB63685">
    <property type="protein sequence ID" value="ABB63685"/>
    <property type="gene ID" value="SDY_3729"/>
</dbReference>
<dbReference type="KEGG" id="sdy:SDY_3729"/>
<dbReference type="PATRIC" id="fig|300267.13.peg.4421"/>
<dbReference type="HOGENOM" id="CLU_040933_0_0_6"/>
<dbReference type="UniPathway" id="UPA00251">
    <property type="reaction ID" value="UER00321"/>
</dbReference>
<dbReference type="Proteomes" id="UP000002716">
    <property type="component" value="Chromosome"/>
</dbReference>
<dbReference type="GO" id="GO:0005829">
    <property type="term" value="C:cytosol"/>
    <property type="evidence" value="ECO:0007669"/>
    <property type="project" value="TreeGrafter"/>
</dbReference>
<dbReference type="GO" id="GO:0004853">
    <property type="term" value="F:uroporphyrinogen decarboxylase activity"/>
    <property type="evidence" value="ECO:0007669"/>
    <property type="project" value="UniProtKB-UniRule"/>
</dbReference>
<dbReference type="GO" id="GO:0019353">
    <property type="term" value="P:protoporphyrinogen IX biosynthetic process from glutamate"/>
    <property type="evidence" value="ECO:0007669"/>
    <property type="project" value="TreeGrafter"/>
</dbReference>
<dbReference type="CDD" id="cd00717">
    <property type="entry name" value="URO-D"/>
    <property type="match status" value="1"/>
</dbReference>
<dbReference type="FunFam" id="3.20.20.210:FF:000001">
    <property type="entry name" value="Uroporphyrinogen decarboxylase"/>
    <property type="match status" value="1"/>
</dbReference>
<dbReference type="Gene3D" id="3.20.20.210">
    <property type="match status" value="1"/>
</dbReference>
<dbReference type="HAMAP" id="MF_00218">
    <property type="entry name" value="URO_D"/>
    <property type="match status" value="1"/>
</dbReference>
<dbReference type="InterPro" id="IPR038071">
    <property type="entry name" value="UROD/MetE-like_sf"/>
</dbReference>
<dbReference type="InterPro" id="IPR006361">
    <property type="entry name" value="Uroporphyrinogen_deCO2ase_HemE"/>
</dbReference>
<dbReference type="InterPro" id="IPR000257">
    <property type="entry name" value="Uroporphyrinogen_deCOase"/>
</dbReference>
<dbReference type="NCBIfam" id="TIGR01464">
    <property type="entry name" value="hemE"/>
    <property type="match status" value="1"/>
</dbReference>
<dbReference type="PANTHER" id="PTHR21091">
    <property type="entry name" value="METHYLTETRAHYDROFOLATE:HOMOCYSTEINE METHYLTRANSFERASE RELATED"/>
    <property type="match status" value="1"/>
</dbReference>
<dbReference type="PANTHER" id="PTHR21091:SF169">
    <property type="entry name" value="UROPORPHYRINOGEN DECARBOXYLASE"/>
    <property type="match status" value="1"/>
</dbReference>
<dbReference type="Pfam" id="PF01208">
    <property type="entry name" value="URO-D"/>
    <property type="match status" value="1"/>
</dbReference>
<dbReference type="SUPFAM" id="SSF51726">
    <property type="entry name" value="UROD/MetE-like"/>
    <property type="match status" value="1"/>
</dbReference>
<dbReference type="PROSITE" id="PS00906">
    <property type="entry name" value="UROD_1"/>
    <property type="match status" value="1"/>
</dbReference>
<dbReference type="PROSITE" id="PS00907">
    <property type="entry name" value="UROD_2"/>
    <property type="match status" value="1"/>
</dbReference>
<name>DCUP_SHIDS</name>
<accession>Q32AH0</accession>
<reference key="1">
    <citation type="journal article" date="2005" name="Nucleic Acids Res.">
        <title>Genome dynamics and diversity of Shigella species, the etiologic agents of bacillary dysentery.</title>
        <authorList>
            <person name="Yang F."/>
            <person name="Yang J."/>
            <person name="Zhang X."/>
            <person name="Chen L."/>
            <person name="Jiang Y."/>
            <person name="Yan Y."/>
            <person name="Tang X."/>
            <person name="Wang J."/>
            <person name="Xiong Z."/>
            <person name="Dong J."/>
            <person name="Xue Y."/>
            <person name="Zhu Y."/>
            <person name="Xu X."/>
            <person name="Sun L."/>
            <person name="Chen S."/>
            <person name="Nie H."/>
            <person name="Peng J."/>
            <person name="Xu J."/>
            <person name="Wang Y."/>
            <person name="Yuan Z."/>
            <person name="Wen Y."/>
            <person name="Yao Z."/>
            <person name="Shen Y."/>
            <person name="Qiang B."/>
            <person name="Hou Y."/>
            <person name="Yu J."/>
            <person name="Jin Q."/>
        </authorList>
    </citation>
    <scope>NUCLEOTIDE SEQUENCE [LARGE SCALE GENOMIC DNA]</scope>
    <source>
        <strain>Sd197</strain>
    </source>
</reference>
<comment type="function">
    <text evidence="1">Catalyzes the decarboxylation of four acetate groups of uroporphyrinogen-III to yield coproporphyrinogen-III.</text>
</comment>
<comment type="catalytic activity">
    <reaction evidence="1">
        <text>uroporphyrinogen III + 4 H(+) = coproporphyrinogen III + 4 CO2</text>
        <dbReference type="Rhea" id="RHEA:19865"/>
        <dbReference type="ChEBI" id="CHEBI:15378"/>
        <dbReference type="ChEBI" id="CHEBI:16526"/>
        <dbReference type="ChEBI" id="CHEBI:57308"/>
        <dbReference type="ChEBI" id="CHEBI:57309"/>
        <dbReference type="EC" id="4.1.1.37"/>
    </reaction>
</comment>
<comment type="pathway">
    <text evidence="1">Porphyrin-containing compound metabolism; protoporphyrin-IX biosynthesis; coproporphyrinogen-III from 5-aminolevulinate: step 4/4.</text>
</comment>
<comment type="subunit">
    <text evidence="1">Homodimer.</text>
</comment>
<comment type="subcellular location">
    <subcellularLocation>
        <location evidence="1">Cytoplasm</location>
    </subcellularLocation>
</comment>
<comment type="similarity">
    <text evidence="1">Belongs to the uroporphyrinogen decarboxylase family.</text>
</comment>
<keyword id="KW-0963">Cytoplasm</keyword>
<keyword id="KW-0210">Decarboxylase</keyword>
<keyword id="KW-0456">Lyase</keyword>
<keyword id="KW-0627">Porphyrin biosynthesis</keyword>
<keyword id="KW-1185">Reference proteome</keyword>
<sequence>MTELKNDRYLRALLRQPVDVTPVWMMRQAGRYLPEYKATRAQAGDFMSLCKNAELACEVTLQPLRRYPLDAAILFSDILTVPDAMGLGLYFEAGEGPRFTSPVTCKADVDKLPIPDPEDELGYVMNAVRTIRRELKGEVPLIGFSGSPWTLATYMVEGGSSKAFTVIKKMMYADPQALHALLDKLAKSVTLYLNAQIKAGAQAVMIFDTWGGVLTGRDYQQFSLYYMHKIVDGLLRENDGRRVPVTLFTKGGGQWLEAMAETGCDALGLDWTTDIADARRRVGNKVALQGNMDPSMLYAPPARIEEEVATILAGFGHGEGHVFNLGHGIHQDVPLEHAGVFVEAVHRLSEQYHR</sequence>
<gene>
    <name evidence="1" type="primary">hemE</name>
    <name type="ordered locus">SDY_3729</name>
</gene>